<reference key="1">
    <citation type="journal article" date="2010" name="J. Bacteriol.">
        <title>Genome sequence of the Fleming strain of Micrococcus luteus, a simple free-living actinobacterium.</title>
        <authorList>
            <person name="Young M."/>
            <person name="Artsatbanov V."/>
            <person name="Beller H.R."/>
            <person name="Chandra G."/>
            <person name="Chater K.F."/>
            <person name="Dover L.G."/>
            <person name="Goh E.B."/>
            <person name="Kahan T."/>
            <person name="Kaprelyants A.S."/>
            <person name="Kyrpides N."/>
            <person name="Lapidus A."/>
            <person name="Lowry S.R."/>
            <person name="Lykidis A."/>
            <person name="Mahillon J."/>
            <person name="Markowitz V."/>
            <person name="Mavromatis K."/>
            <person name="Mukamolova G.V."/>
            <person name="Oren A."/>
            <person name="Rokem J.S."/>
            <person name="Smith M.C."/>
            <person name="Young D.I."/>
            <person name="Greenblatt C.L."/>
        </authorList>
    </citation>
    <scope>NUCLEOTIDE SEQUENCE [LARGE SCALE GENOMIC DNA]</scope>
    <source>
        <strain>ATCC 4698 / DSM 20030 / JCM 1464 / CCM 169 / CCUG 5858 / IAM 1056 / NBRC 3333 / NCIMB 9278 / NCTC 2665 / VKM Ac-2230</strain>
    </source>
</reference>
<gene>
    <name evidence="1" type="primary">rpsO</name>
    <name type="ordered locus">Mlut_07090</name>
</gene>
<sequence>MALDPAVKQQIIKEYATHEGDTGSPEVQIAVLSRRIKDLTEHLKEHKHDHHTRRGLMGLVGRRRRMLGYLQNVDIERYRALIERLGLRK</sequence>
<accession>C5C9T9</accession>
<name>RS15_MICLC</name>
<proteinExistence type="inferred from homology"/>
<protein>
    <recommendedName>
        <fullName evidence="1">Small ribosomal subunit protein uS15</fullName>
    </recommendedName>
    <alternativeName>
        <fullName evidence="2">30S ribosomal protein S15</fullName>
    </alternativeName>
</protein>
<keyword id="KW-1185">Reference proteome</keyword>
<keyword id="KW-0687">Ribonucleoprotein</keyword>
<keyword id="KW-0689">Ribosomal protein</keyword>
<keyword id="KW-0694">RNA-binding</keyword>
<keyword id="KW-0699">rRNA-binding</keyword>
<comment type="function">
    <text evidence="1">One of the primary rRNA binding proteins, it binds directly to 16S rRNA where it helps nucleate assembly of the platform of the 30S subunit by binding and bridging several RNA helices of the 16S rRNA.</text>
</comment>
<comment type="function">
    <text evidence="1">Forms an intersubunit bridge (bridge B4) with the 23S rRNA of the 50S subunit in the ribosome.</text>
</comment>
<comment type="subunit">
    <text evidence="1">Part of the 30S ribosomal subunit. Forms a bridge to the 50S subunit in the 70S ribosome, contacting the 23S rRNA.</text>
</comment>
<comment type="similarity">
    <text evidence="1">Belongs to the universal ribosomal protein uS15 family.</text>
</comment>
<organism>
    <name type="scientific">Micrococcus luteus (strain ATCC 4698 / DSM 20030 / JCM 1464 / CCM 169 / CCUG 5858 / IAM 1056 / NBRC 3333 / NCIMB 9278 / NCTC 2665 / VKM Ac-2230)</name>
    <name type="common">Micrococcus lysodeikticus</name>
    <dbReference type="NCBI Taxonomy" id="465515"/>
    <lineage>
        <taxon>Bacteria</taxon>
        <taxon>Bacillati</taxon>
        <taxon>Actinomycetota</taxon>
        <taxon>Actinomycetes</taxon>
        <taxon>Micrococcales</taxon>
        <taxon>Micrococcaceae</taxon>
        <taxon>Micrococcus</taxon>
    </lineage>
</organism>
<feature type="chain" id="PRO_1000214764" description="Small ribosomal subunit protein uS15">
    <location>
        <begin position="1"/>
        <end position="89"/>
    </location>
</feature>
<dbReference type="EMBL" id="CP001628">
    <property type="protein sequence ID" value="ACS30241.1"/>
    <property type="molecule type" value="Genomic_DNA"/>
</dbReference>
<dbReference type="RefSeq" id="WP_010079122.1">
    <property type="nucleotide sequence ID" value="NC_012803.1"/>
</dbReference>
<dbReference type="SMR" id="C5C9T9"/>
<dbReference type="STRING" id="465515.Mlut_07090"/>
<dbReference type="EnsemblBacteria" id="ACS30241">
    <property type="protein sequence ID" value="ACS30241"/>
    <property type="gene ID" value="Mlut_07090"/>
</dbReference>
<dbReference type="GeneID" id="93344874"/>
<dbReference type="KEGG" id="mlu:Mlut_07090"/>
<dbReference type="eggNOG" id="COG0184">
    <property type="taxonomic scope" value="Bacteria"/>
</dbReference>
<dbReference type="HOGENOM" id="CLU_148518_0_0_11"/>
<dbReference type="Proteomes" id="UP000000738">
    <property type="component" value="Chromosome"/>
</dbReference>
<dbReference type="GO" id="GO:0022627">
    <property type="term" value="C:cytosolic small ribosomal subunit"/>
    <property type="evidence" value="ECO:0007669"/>
    <property type="project" value="TreeGrafter"/>
</dbReference>
<dbReference type="GO" id="GO:0019843">
    <property type="term" value="F:rRNA binding"/>
    <property type="evidence" value="ECO:0007669"/>
    <property type="project" value="UniProtKB-UniRule"/>
</dbReference>
<dbReference type="GO" id="GO:0003735">
    <property type="term" value="F:structural constituent of ribosome"/>
    <property type="evidence" value="ECO:0007669"/>
    <property type="project" value="InterPro"/>
</dbReference>
<dbReference type="GO" id="GO:0006412">
    <property type="term" value="P:translation"/>
    <property type="evidence" value="ECO:0007669"/>
    <property type="project" value="UniProtKB-UniRule"/>
</dbReference>
<dbReference type="CDD" id="cd00353">
    <property type="entry name" value="Ribosomal_S15p_S13e"/>
    <property type="match status" value="1"/>
</dbReference>
<dbReference type="FunFam" id="1.10.287.10:FF:000002">
    <property type="entry name" value="30S ribosomal protein S15"/>
    <property type="match status" value="1"/>
</dbReference>
<dbReference type="Gene3D" id="6.10.250.3130">
    <property type="match status" value="1"/>
</dbReference>
<dbReference type="Gene3D" id="1.10.287.10">
    <property type="entry name" value="S15/NS1, RNA-binding"/>
    <property type="match status" value="1"/>
</dbReference>
<dbReference type="HAMAP" id="MF_01343_B">
    <property type="entry name" value="Ribosomal_uS15_B"/>
    <property type="match status" value="1"/>
</dbReference>
<dbReference type="InterPro" id="IPR000589">
    <property type="entry name" value="Ribosomal_uS15"/>
</dbReference>
<dbReference type="InterPro" id="IPR005290">
    <property type="entry name" value="Ribosomal_uS15_bac-type"/>
</dbReference>
<dbReference type="InterPro" id="IPR009068">
    <property type="entry name" value="uS15_NS1_RNA-bd_sf"/>
</dbReference>
<dbReference type="NCBIfam" id="TIGR00952">
    <property type="entry name" value="S15_bact"/>
    <property type="match status" value="1"/>
</dbReference>
<dbReference type="PANTHER" id="PTHR23321">
    <property type="entry name" value="RIBOSOMAL PROTEIN S15, BACTERIAL AND ORGANELLAR"/>
    <property type="match status" value="1"/>
</dbReference>
<dbReference type="PANTHER" id="PTHR23321:SF26">
    <property type="entry name" value="SMALL RIBOSOMAL SUBUNIT PROTEIN US15M"/>
    <property type="match status" value="1"/>
</dbReference>
<dbReference type="Pfam" id="PF00312">
    <property type="entry name" value="Ribosomal_S15"/>
    <property type="match status" value="1"/>
</dbReference>
<dbReference type="SMART" id="SM01387">
    <property type="entry name" value="Ribosomal_S15"/>
    <property type="match status" value="1"/>
</dbReference>
<dbReference type="SUPFAM" id="SSF47060">
    <property type="entry name" value="S15/NS1 RNA-binding domain"/>
    <property type="match status" value="1"/>
</dbReference>
<dbReference type="PROSITE" id="PS00362">
    <property type="entry name" value="RIBOSOMAL_S15"/>
    <property type="match status" value="1"/>
</dbReference>
<evidence type="ECO:0000255" key="1">
    <source>
        <dbReference type="HAMAP-Rule" id="MF_01343"/>
    </source>
</evidence>
<evidence type="ECO:0000305" key="2"/>